<proteinExistence type="evidence at protein level"/>
<name>HCP_RHOCA</name>
<reference key="1">
    <citation type="journal article" date="2004" name="J. Biol. Chem.">
        <title>Hydroxylamine assimilation by Rhodobacter capsulatus E1F1. requirement of the hcp gene (hybrid cluster protein) located in the nitrate assimilation nas gene region for hydroxylamine reduction.</title>
        <authorList>
            <person name="Cabello P."/>
            <person name="Pino C."/>
            <person name="Olmo-Mira M.F."/>
            <person name="Castillo F."/>
            <person name="Roldan M.D."/>
            <person name="Moreno-Vivian C."/>
        </authorList>
    </citation>
    <scope>NUCLEOTIDE SEQUENCE [GENOMIC DNA]</scope>
    <scope>FUNCTION</scope>
    <scope>CATALYTIC ACTIVITY</scope>
    <scope>DISRUPTION PHENOTYPE</scope>
    <scope>BIOPHYSICOCHEMICAL PROPERTIES</scope>
    <scope>ACTIVITY REGULATION</scope>
    <scope>SUBCELLULAR LOCATION</scope>
    <scope>SUBSTRATE SPECIFICITY</scope>
    <scope>COFACTOR</scope>
    <source>
        <strain>B10S</strain>
        <strain>E1F1</strain>
    </source>
</reference>
<feature type="chain" id="PRO_0000430413" description="Hydroxylamine reductase">
    <location>
        <begin position="1"/>
        <end position="546"/>
    </location>
</feature>
<feature type="binding site" evidence="1">
    <location>
        <position position="3"/>
    </location>
    <ligand>
        <name>[4Fe-4S] cluster</name>
        <dbReference type="ChEBI" id="CHEBI:49883"/>
    </ligand>
</feature>
<feature type="binding site" evidence="1">
    <location>
        <position position="6"/>
    </location>
    <ligand>
        <name>[4Fe-4S] cluster</name>
        <dbReference type="ChEBI" id="CHEBI:49883"/>
    </ligand>
</feature>
<feature type="binding site" evidence="1">
    <location>
        <position position="18"/>
    </location>
    <ligand>
        <name>[4Fe-4S] cluster</name>
        <dbReference type="ChEBI" id="CHEBI:49883"/>
    </ligand>
</feature>
<feature type="binding site" evidence="1">
    <location>
        <position position="25"/>
    </location>
    <ligand>
        <name>[4Fe-4S] cluster</name>
        <dbReference type="ChEBI" id="CHEBI:49883"/>
    </ligand>
</feature>
<feature type="binding site" evidence="1">
    <location>
        <position position="245"/>
    </location>
    <ligand>
        <name>hybrid [4Fe-2O-2S] cluster</name>
        <dbReference type="ChEBI" id="CHEBI:60519"/>
    </ligand>
</feature>
<feature type="binding site" evidence="1">
    <location>
        <position position="269"/>
    </location>
    <ligand>
        <name>hybrid [4Fe-2O-2S] cluster</name>
        <dbReference type="ChEBI" id="CHEBI:60519"/>
    </ligand>
</feature>
<feature type="binding site" evidence="1">
    <location>
        <position position="313"/>
    </location>
    <ligand>
        <name>hybrid [4Fe-2O-2S] cluster</name>
        <dbReference type="ChEBI" id="CHEBI:60519"/>
    </ligand>
</feature>
<feature type="binding site" description="via persulfide group" evidence="1">
    <location>
        <position position="401"/>
    </location>
    <ligand>
        <name>hybrid [4Fe-2O-2S] cluster</name>
        <dbReference type="ChEBI" id="CHEBI:60519"/>
    </ligand>
</feature>
<feature type="binding site" evidence="1">
    <location>
        <position position="429"/>
    </location>
    <ligand>
        <name>hybrid [4Fe-2O-2S] cluster</name>
        <dbReference type="ChEBI" id="CHEBI:60519"/>
    </ligand>
</feature>
<feature type="binding site" evidence="1">
    <location>
        <position position="454"/>
    </location>
    <ligand>
        <name>hybrid [4Fe-2O-2S] cluster</name>
        <dbReference type="ChEBI" id="CHEBI:60519"/>
    </ligand>
</feature>
<feature type="binding site" evidence="1">
    <location>
        <position position="488"/>
    </location>
    <ligand>
        <name>hybrid [4Fe-2O-2S] cluster</name>
        <dbReference type="ChEBI" id="CHEBI:60519"/>
    </ligand>
</feature>
<feature type="binding site" evidence="1">
    <location>
        <position position="490"/>
    </location>
    <ligand>
        <name>hybrid [4Fe-2O-2S] cluster</name>
        <dbReference type="ChEBI" id="CHEBI:60519"/>
    </ligand>
</feature>
<feature type="modified residue" description="Cysteine persulfide" evidence="1">
    <location>
        <position position="401"/>
    </location>
</feature>
<sequence>MYCIQCEQTLHTATGTGCRFARGDCGKTAAISDQQDALVAALLAVSSHADAARKVGLIDAEVDAFVPQALFATLTNVNFDPERLAGYIRKAQELRNRLQLALAGKPLALPALADADWPFAAAQQAEAGKIVALNRDAARIGEDVLGLRLLCLYGLKGIAAYMEHARVLGQTDTQVAAGFHAHMAYLASEPTDAKGLFAEALAIGTLNFRVMEMLDAGATGTFGDPQPTPVNRRPVAGKAILVSGHDLHDLLRILEQTAGRGINVYTHGEMLPAHGYPAFHAHPHLIGNYGSAWQNQQAEFAAFPGAIVMTSNCLIDPRTGAYQDRIFTRSIVGWPGVRHIEGEDFAEVIACAEALPGFAATEAPVTQLTGFGRNALMTAAPAVIERVKVGKIRHFYLIGGCDGARAERAYYADLARMLPQDTVVLTLGCGKFRLDGIDFGAVDGLPRLLDVGQCNDAYAAIRLALALAEAFDCGVNDLPLTLVLSWFEQKAIVILLTLLALGVKDIRVGPTAPGFLTPNLIATLNAQFGLRLISTPEETMAETLSA</sequence>
<keyword id="KW-0004">4Fe-4S</keyword>
<keyword id="KW-0963">Cytoplasm</keyword>
<keyword id="KW-0408">Iron</keyword>
<keyword id="KW-0411">Iron-sulfur</keyword>
<keyword id="KW-0479">Metal-binding</keyword>
<keyword id="KW-0520">NAD</keyword>
<keyword id="KW-0560">Oxidoreductase</keyword>
<organism>
    <name type="scientific">Rhodobacter capsulatus</name>
    <name type="common">Rhodopseudomonas capsulata</name>
    <dbReference type="NCBI Taxonomy" id="1061"/>
    <lineage>
        <taxon>Bacteria</taxon>
        <taxon>Pseudomonadati</taxon>
        <taxon>Pseudomonadota</taxon>
        <taxon>Alphaproteobacteria</taxon>
        <taxon>Rhodobacterales</taxon>
        <taxon>Rhodobacter group</taxon>
        <taxon>Rhodobacter</taxon>
    </lineage>
</organism>
<comment type="function">
    <text evidence="2">Could be involved in assimilation and/or detoxification of hydroxylamine, which is a toxic compound that may be formed during nitrate/nitrite assimilation. Catalyzes the reduction of hydroxylamine to form NH(3) and H(2)O. It has a low reductase activity with FAD, FMN, benzyl viologen and bromphenol blue as electrons donors, but it is not able to use NAD or NADP.</text>
</comment>
<comment type="catalytic activity">
    <reaction evidence="1 2">
        <text>A + NH4(+) + H2O = hydroxylamine + AH2 + H(+)</text>
        <dbReference type="Rhea" id="RHEA:22052"/>
        <dbReference type="ChEBI" id="CHEBI:13193"/>
        <dbReference type="ChEBI" id="CHEBI:15377"/>
        <dbReference type="ChEBI" id="CHEBI:15378"/>
        <dbReference type="ChEBI" id="CHEBI:15429"/>
        <dbReference type="ChEBI" id="CHEBI:17499"/>
        <dbReference type="ChEBI" id="CHEBI:28938"/>
        <dbReference type="EC" id="1.7.99.1"/>
    </reaction>
</comment>
<comment type="cofactor">
    <cofactor evidence="1 2">
        <name>[4Fe-4S] cluster</name>
        <dbReference type="ChEBI" id="CHEBI:49883"/>
    </cofactor>
    <text evidence="1 2">Binds 1 [4Fe-4S] cluster.</text>
</comment>
<comment type="cofactor">
    <cofactor evidence="1 2">
        <name>hybrid [4Fe-2O-2S] cluster</name>
        <dbReference type="ChEBI" id="CHEBI:60519"/>
    </cofactor>
    <text evidence="1 2">Binds 1 hybrid [4Fe-2O-2S] cluster.</text>
</comment>
<comment type="activity regulation">
    <text evidence="2">Inhibited by cyanide and by sulfide and iron reagents such as dithioerythritol, 2,2'-dipyridyl and o-phenanthroline.</text>
</comment>
<comment type="biophysicochemical properties">
    <kinetics>
        <KM evidence="2">7 uM for methyl viologen (at pH 9.3 and 40 degrees Celsius)</KM>
        <KM evidence="2">1 mM for hydroxylamine (at pH 9.3 and 40 degrees Celsius)</KM>
    </kinetics>
    <phDependence>
        <text evidence="2">Optimum pH i 9.3.</text>
    </phDependence>
    <temperatureDependence>
        <text evidence="2">Optimum temperature is 40 degrees Celsius.</text>
    </temperatureDependence>
</comment>
<comment type="subcellular location">
    <subcellularLocation>
        <location evidence="1 2">Cytoplasm</location>
    </subcellularLocation>
</comment>
<comment type="disruption phenotype">
    <text evidence="2">Cells lacking this gene are unable to grow with hydroxylamine as the sole nitrogen source.</text>
</comment>
<comment type="similarity">
    <text evidence="1 4">Belongs to the HCP family.</text>
</comment>
<gene>
    <name evidence="1 3" type="primary">hcp</name>
</gene>
<dbReference type="EC" id="1.7.99.1" evidence="1 2"/>
<dbReference type="EMBL" id="AY273169">
    <property type="protein sequence ID" value="AAQ18177.1"/>
    <property type="molecule type" value="Genomic_DNA"/>
</dbReference>
<dbReference type="SMR" id="Q6WRT6"/>
<dbReference type="GO" id="GO:0005737">
    <property type="term" value="C:cytoplasm"/>
    <property type="evidence" value="ECO:0007669"/>
    <property type="project" value="UniProtKB-SubCell"/>
</dbReference>
<dbReference type="GO" id="GO:0051539">
    <property type="term" value="F:4 iron, 4 sulfur cluster binding"/>
    <property type="evidence" value="ECO:0007669"/>
    <property type="project" value="UniProtKB-KW"/>
</dbReference>
<dbReference type="GO" id="GO:0050418">
    <property type="term" value="F:hydroxylamine reductase activity"/>
    <property type="evidence" value="ECO:0007669"/>
    <property type="project" value="UniProtKB-UniRule"/>
</dbReference>
<dbReference type="GO" id="GO:0046872">
    <property type="term" value="F:metal ion binding"/>
    <property type="evidence" value="ECO:0007669"/>
    <property type="project" value="UniProtKB-KW"/>
</dbReference>
<dbReference type="GO" id="GO:0004601">
    <property type="term" value="F:peroxidase activity"/>
    <property type="evidence" value="ECO:0007669"/>
    <property type="project" value="TreeGrafter"/>
</dbReference>
<dbReference type="GO" id="GO:0042542">
    <property type="term" value="P:response to hydrogen peroxide"/>
    <property type="evidence" value="ECO:0007669"/>
    <property type="project" value="TreeGrafter"/>
</dbReference>
<dbReference type="CDD" id="cd01914">
    <property type="entry name" value="HCP"/>
    <property type="match status" value="1"/>
</dbReference>
<dbReference type="FunFam" id="1.20.1270.20:FF:000001">
    <property type="entry name" value="Hydroxylamine reductase"/>
    <property type="match status" value="1"/>
</dbReference>
<dbReference type="FunFam" id="3.40.50.2030:FF:000001">
    <property type="entry name" value="Hydroxylamine reductase"/>
    <property type="match status" value="1"/>
</dbReference>
<dbReference type="FunFam" id="3.40.50.2030:FF:000002">
    <property type="entry name" value="Hydroxylamine reductase"/>
    <property type="match status" value="1"/>
</dbReference>
<dbReference type="Gene3D" id="1.20.1270.20">
    <property type="match status" value="2"/>
</dbReference>
<dbReference type="Gene3D" id="3.40.50.2030">
    <property type="match status" value="2"/>
</dbReference>
<dbReference type="HAMAP" id="MF_00069">
    <property type="entry name" value="Hydroxylam_reduct"/>
    <property type="match status" value="1"/>
</dbReference>
<dbReference type="InterPro" id="IPR004137">
    <property type="entry name" value="HCP/CODH"/>
</dbReference>
<dbReference type="InterPro" id="IPR010048">
    <property type="entry name" value="Hydroxylam_reduct"/>
</dbReference>
<dbReference type="InterPro" id="IPR016099">
    <property type="entry name" value="Prismane-like_a/b-sand"/>
</dbReference>
<dbReference type="InterPro" id="IPR011254">
    <property type="entry name" value="Prismane-like_sf"/>
</dbReference>
<dbReference type="InterPro" id="IPR016100">
    <property type="entry name" value="Prismane_a-bundle"/>
</dbReference>
<dbReference type="NCBIfam" id="TIGR01703">
    <property type="entry name" value="hybrid_clust"/>
    <property type="match status" value="1"/>
</dbReference>
<dbReference type="NCBIfam" id="NF003658">
    <property type="entry name" value="PRK05290.1"/>
    <property type="match status" value="1"/>
</dbReference>
<dbReference type="PANTHER" id="PTHR30109">
    <property type="entry name" value="HYDROXYLAMINE REDUCTASE"/>
    <property type="match status" value="1"/>
</dbReference>
<dbReference type="PANTHER" id="PTHR30109:SF0">
    <property type="entry name" value="HYDROXYLAMINE REDUCTASE"/>
    <property type="match status" value="1"/>
</dbReference>
<dbReference type="Pfam" id="PF03063">
    <property type="entry name" value="Prismane"/>
    <property type="match status" value="1"/>
</dbReference>
<dbReference type="PIRSF" id="PIRSF000076">
    <property type="entry name" value="HCP"/>
    <property type="match status" value="1"/>
</dbReference>
<dbReference type="SUPFAM" id="SSF56821">
    <property type="entry name" value="Prismane protein-like"/>
    <property type="match status" value="1"/>
</dbReference>
<protein>
    <recommendedName>
        <fullName evidence="1 3">Hydroxylamine reductase</fullName>
        <ecNumber evidence="1 2">1.7.99.1</ecNumber>
    </recommendedName>
    <alternativeName>
        <fullName evidence="1 3">Hybrid-cluster protein</fullName>
        <shortName evidence="1 3">HCP</shortName>
    </alternativeName>
    <alternativeName>
        <fullName evidence="1 3">Prismane protein</fullName>
    </alternativeName>
</protein>
<accession>Q6WRT6</accession>
<evidence type="ECO:0000255" key="1">
    <source>
        <dbReference type="HAMAP-Rule" id="MF_00069"/>
    </source>
</evidence>
<evidence type="ECO:0000269" key="2">
    <source>
    </source>
</evidence>
<evidence type="ECO:0000303" key="3">
    <source>
    </source>
</evidence>
<evidence type="ECO:0000305" key="4"/>